<dbReference type="EMBL" id="CP001139">
    <property type="protein sequence ID" value="ACH66436.1"/>
    <property type="molecule type" value="Genomic_DNA"/>
</dbReference>
<dbReference type="RefSeq" id="WP_012533723.1">
    <property type="nucleotide sequence ID" value="NC_011184.1"/>
</dbReference>
<dbReference type="SMR" id="B5FGU8"/>
<dbReference type="KEGG" id="vfm:VFMJ11_2026"/>
<dbReference type="HOGENOM" id="CLU_030174_1_0_6"/>
<dbReference type="Proteomes" id="UP000001857">
    <property type="component" value="Chromosome I"/>
</dbReference>
<dbReference type="GO" id="GO:0032153">
    <property type="term" value="C:cell division site"/>
    <property type="evidence" value="ECO:0007669"/>
    <property type="project" value="UniProtKB-UniRule"/>
</dbReference>
<dbReference type="GO" id="GO:0005886">
    <property type="term" value="C:plasma membrane"/>
    <property type="evidence" value="ECO:0007669"/>
    <property type="project" value="UniProtKB-SubCell"/>
</dbReference>
<dbReference type="GO" id="GO:0000917">
    <property type="term" value="P:division septum assembly"/>
    <property type="evidence" value="ECO:0007669"/>
    <property type="project" value="TreeGrafter"/>
</dbReference>
<dbReference type="GO" id="GO:0043093">
    <property type="term" value="P:FtsZ-dependent cytokinesis"/>
    <property type="evidence" value="ECO:0007669"/>
    <property type="project" value="UniProtKB-UniRule"/>
</dbReference>
<dbReference type="Gene3D" id="3.30.1400.10">
    <property type="entry name" value="ZipA, C-terminal FtsZ-binding domain"/>
    <property type="match status" value="1"/>
</dbReference>
<dbReference type="HAMAP" id="MF_00509">
    <property type="entry name" value="ZipA"/>
    <property type="match status" value="1"/>
</dbReference>
<dbReference type="InterPro" id="IPR011919">
    <property type="entry name" value="Cell_div_ZipA"/>
</dbReference>
<dbReference type="InterPro" id="IPR007449">
    <property type="entry name" value="ZipA_FtsZ-bd_C"/>
</dbReference>
<dbReference type="InterPro" id="IPR036765">
    <property type="entry name" value="ZipA_FtsZ-bd_C_sf"/>
</dbReference>
<dbReference type="NCBIfam" id="TIGR02205">
    <property type="entry name" value="septum_zipA"/>
    <property type="match status" value="1"/>
</dbReference>
<dbReference type="PANTHER" id="PTHR38685">
    <property type="entry name" value="CELL DIVISION PROTEIN ZIPA"/>
    <property type="match status" value="1"/>
</dbReference>
<dbReference type="PANTHER" id="PTHR38685:SF1">
    <property type="entry name" value="CELL DIVISION PROTEIN ZIPA"/>
    <property type="match status" value="1"/>
</dbReference>
<dbReference type="Pfam" id="PF04354">
    <property type="entry name" value="ZipA_C"/>
    <property type="match status" value="1"/>
</dbReference>
<dbReference type="SMART" id="SM00771">
    <property type="entry name" value="ZipA_C"/>
    <property type="match status" value="1"/>
</dbReference>
<dbReference type="SUPFAM" id="SSF64383">
    <property type="entry name" value="Cell-division protein ZipA, C-terminal domain"/>
    <property type="match status" value="1"/>
</dbReference>
<name>ZIPA_ALIFM</name>
<sequence length="325" mass="36166">MQELRLVLILVGALAIAALLFHGLWTSRKETSSKFGKKVDIDFDSDVDDEQAAPMRGFDQPKEDVVVQKERKEPAFAREEVPTSDDPLFEGTVSSESNKFTEQEKPTVQQAQPQPVVQQVQEPAVGRIEPEAKPVAAPVKREEPTISFSAIDDEVLTQPEPIQAKVDIPETSTYLEPEIIIAEPEPEPEQDVIVINVHGMGSDRFSGNRLFNSLEQNGLVFGDMAIYHRHSDLSGAGKVLFSVANMVSPGHFQVPEGEEFSTPGISFFLPLPCYGDAEHNFKLMLQTAQMVSSELGGNVLDEKRDMLTPNKIDEYKQRVKVFCRK</sequence>
<gene>
    <name evidence="1" type="primary">zipA</name>
    <name type="ordered locus">VFMJ11_2026</name>
</gene>
<feature type="chain" id="PRO_1000127234" description="Cell division protein ZipA">
    <location>
        <begin position="1"/>
        <end position="325"/>
    </location>
</feature>
<feature type="topological domain" description="Periplasmic" evidence="1">
    <location>
        <begin position="1"/>
        <end position="5"/>
    </location>
</feature>
<feature type="transmembrane region" description="Helical" evidence="1">
    <location>
        <begin position="6"/>
        <end position="26"/>
    </location>
</feature>
<feature type="topological domain" description="Cytoplasmic" evidence="1">
    <location>
        <begin position="27"/>
        <end position="325"/>
    </location>
</feature>
<accession>B5FGU8</accession>
<evidence type="ECO:0000255" key="1">
    <source>
        <dbReference type="HAMAP-Rule" id="MF_00509"/>
    </source>
</evidence>
<proteinExistence type="inferred from homology"/>
<comment type="function">
    <text evidence="1">Essential cell division protein that stabilizes the FtsZ protofilaments by cross-linking them and that serves as a cytoplasmic membrane anchor for the Z ring. Also required for the recruitment to the septal ring of downstream cell division proteins.</text>
</comment>
<comment type="subunit">
    <text evidence="1">Interacts with FtsZ via their C-terminal domains.</text>
</comment>
<comment type="subcellular location">
    <subcellularLocation>
        <location evidence="1">Cell inner membrane</location>
        <topology evidence="1">Single-pass type I membrane protein</topology>
    </subcellularLocation>
    <text evidence="1">Localizes to the Z ring in an FtsZ-dependent manner.</text>
</comment>
<comment type="similarity">
    <text evidence="1">Belongs to the ZipA family.</text>
</comment>
<reference key="1">
    <citation type="submission" date="2008-08" db="EMBL/GenBank/DDBJ databases">
        <title>Complete sequence of Vibrio fischeri strain MJ11.</title>
        <authorList>
            <person name="Mandel M.J."/>
            <person name="Stabb E.V."/>
            <person name="Ruby E.G."/>
            <person name="Ferriera S."/>
            <person name="Johnson J."/>
            <person name="Kravitz S."/>
            <person name="Beeson K."/>
            <person name="Sutton G."/>
            <person name="Rogers Y.-H."/>
            <person name="Friedman R."/>
            <person name="Frazier M."/>
            <person name="Venter J.C."/>
        </authorList>
    </citation>
    <scope>NUCLEOTIDE SEQUENCE [LARGE SCALE GENOMIC DNA]</scope>
    <source>
        <strain>MJ11</strain>
    </source>
</reference>
<organism>
    <name type="scientific">Aliivibrio fischeri (strain MJ11)</name>
    <name type="common">Vibrio fischeri</name>
    <dbReference type="NCBI Taxonomy" id="388396"/>
    <lineage>
        <taxon>Bacteria</taxon>
        <taxon>Pseudomonadati</taxon>
        <taxon>Pseudomonadota</taxon>
        <taxon>Gammaproteobacteria</taxon>
        <taxon>Vibrionales</taxon>
        <taxon>Vibrionaceae</taxon>
        <taxon>Aliivibrio</taxon>
    </lineage>
</organism>
<keyword id="KW-0131">Cell cycle</keyword>
<keyword id="KW-0132">Cell division</keyword>
<keyword id="KW-0997">Cell inner membrane</keyword>
<keyword id="KW-1003">Cell membrane</keyword>
<keyword id="KW-0472">Membrane</keyword>
<keyword id="KW-0812">Transmembrane</keyword>
<keyword id="KW-1133">Transmembrane helix</keyword>
<protein>
    <recommendedName>
        <fullName evidence="1">Cell division protein ZipA</fullName>
    </recommendedName>
</protein>